<comment type="function">
    <text evidence="2">Sesquiterpene synthase involved in gamma-curcumene biosynthesis.</text>
</comment>
<comment type="catalytic activity">
    <reaction evidence="2">
        <text>(2E,6E)-farnesyl diphosphate = gamma-curcumene + diphosphate</text>
        <dbReference type="Rhea" id="RHEA:32031"/>
        <dbReference type="ChEBI" id="CHEBI:33019"/>
        <dbReference type="ChEBI" id="CHEBI:63696"/>
        <dbReference type="ChEBI" id="CHEBI:175763"/>
        <dbReference type="EC" id="4.2.3.94"/>
    </reaction>
</comment>
<comment type="cofactor">
    <cofactor evidence="1">
        <name>Mg(2+)</name>
        <dbReference type="ChEBI" id="CHEBI:18420"/>
    </cofactor>
    <text evidence="1">Binds 3 Mg(2+) ions per subunit.</text>
</comment>
<comment type="pathway">
    <text>Secondary metabolite biosynthesis; terpenoid biosynthesis.</text>
</comment>
<comment type="subcellular location">
    <subcellularLocation>
        <location evidence="1">Cytoplasm</location>
        <location evidence="1">Cytosol</location>
    </subcellularLocation>
</comment>
<comment type="domain">
    <text evidence="1">The Asp-Asp-Xaa-Xaa-Asp/Glu (DDXXD/E) motif is important for the catalytic activity, presumably through binding to Mg(2+).</text>
</comment>
<comment type="similarity">
    <text evidence="3">Belongs to the terpene synthase family.</text>
</comment>
<evidence type="ECO:0000250" key="1"/>
<evidence type="ECO:0000269" key="2">
    <source>
    </source>
</evidence>
<evidence type="ECO:0000305" key="3"/>
<feature type="chain" id="PRO_0000419749" description="Gamma-curcumene synthase">
    <location>
        <begin position="1"/>
        <end position="545"/>
    </location>
</feature>
<feature type="short sequence motif" description="DDXXD motif">
    <location>
        <begin position="299"/>
        <end position="303"/>
    </location>
</feature>
<feature type="binding site" evidence="1">
    <location>
        <position position="299"/>
    </location>
    <ligand>
        <name>Mg(2+)</name>
        <dbReference type="ChEBI" id="CHEBI:18420"/>
        <label>1</label>
    </ligand>
</feature>
<feature type="binding site" evidence="1">
    <location>
        <position position="299"/>
    </location>
    <ligand>
        <name>Mg(2+)</name>
        <dbReference type="ChEBI" id="CHEBI:18420"/>
        <label>2</label>
    </ligand>
</feature>
<feature type="binding site" evidence="1">
    <location>
        <position position="303"/>
    </location>
    <ligand>
        <name>Mg(2+)</name>
        <dbReference type="ChEBI" id="CHEBI:18420"/>
        <label>1</label>
    </ligand>
</feature>
<feature type="binding site" evidence="1">
    <location>
        <position position="303"/>
    </location>
    <ligand>
        <name>Mg(2+)</name>
        <dbReference type="ChEBI" id="CHEBI:18420"/>
        <label>2</label>
    </ligand>
</feature>
<feature type="binding site" evidence="1">
    <location>
        <position position="442"/>
    </location>
    <ligand>
        <name>Mg(2+)</name>
        <dbReference type="ChEBI" id="CHEBI:18420"/>
        <label>3</label>
    </ligand>
</feature>
<feature type="binding site" evidence="1">
    <location>
        <position position="450"/>
    </location>
    <ligand>
        <name>Mg(2+)</name>
        <dbReference type="ChEBI" id="CHEBI:18420"/>
        <label>3</label>
    </ligand>
</feature>
<reference key="1">
    <citation type="journal article" date="2006" name="Arch. Biochem. Biophys.">
        <title>The diverse sesquiterpene profile of patchouli, Pogostemon cablin, is correlated with a limited number of sesquiterpene synthases.</title>
        <authorList>
            <person name="Deguerry F."/>
            <person name="Pastore L."/>
            <person name="Wu S."/>
            <person name="Clark A."/>
            <person name="Chappell J."/>
            <person name="Schalk M."/>
        </authorList>
    </citation>
    <scope>NUCLEOTIDE SEQUENCE [MRNA]</scope>
    <scope>FUNCTION</scope>
    <scope>CATALYTIC ACTIVITY</scope>
</reference>
<sequence>MAAFTANAVDMRPPVITIHPRSKDIFSQFSLDDKLQKQYAQGIEALKEEARSMLMAAKSAKVMILIDTLERLGLGYHFEKEIEEKLEAIYKKEDGDDYDLFTTALRFRLLRQHQRRVPCSVFDKFMNKEGKFEEEPLISDVEGLLSLYDAAYLQIHGEHILQEALIFTTHHLTRIEPQLDDHSPLKLKLNRALEFPFYREIPIIYAHFYISVYERDDSRDEVLLKMAKLSYNFLQNLYKKELSQLSRWWNKLELIPNLPYIRDSVAGAYLWAVALYFEPQYSDVRMAIAKLIQIAAAVDDTYDNYATIREAQLLTEALERLNVHEIDTLPDYMKIVYRFVMSWSEDFERDATIKEQMLATPYFKAEMKKLGRAYNQELKWVMERQLPSFEEYMKNSEITSGVYIMFTVISPYLNSATQKNIDWLLSQPRLASSTAIVMRCCNDLGSNQRESKGGEVMTSLDCYMKQHGASKQETISKFKLIIEDEWKNLNEEWAATTCLPKVMVEIFRNYARIAGFCYKNNGDAYTSPKIVQQCFDALFVNPLRI</sequence>
<name>TPSCS_POGCB</name>
<dbReference type="EC" id="4.2.3.94"/>
<dbReference type="EMBL" id="AY508726">
    <property type="protein sequence ID" value="AAS86319.1"/>
    <property type="molecule type" value="mRNA"/>
</dbReference>
<dbReference type="SMR" id="Q49SP7"/>
<dbReference type="KEGG" id="ag:AAS86319"/>
<dbReference type="BioCyc" id="MetaCyc:MONOMER-14858"/>
<dbReference type="BRENDA" id="4.2.3.94">
    <property type="organism ID" value="9724"/>
</dbReference>
<dbReference type="UniPathway" id="UPA00213"/>
<dbReference type="GO" id="GO:0005829">
    <property type="term" value="C:cytosol"/>
    <property type="evidence" value="ECO:0007669"/>
    <property type="project" value="UniProtKB-SubCell"/>
</dbReference>
<dbReference type="GO" id="GO:0102064">
    <property type="term" value="F:gamma-curcumene synthase activity"/>
    <property type="evidence" value="ECO:0007669"/>
    <property type="project" value="UniProtKB-EC"/>
</dbReference>
<dbReference type="GO" id="GO:0000287">
    <property type="term" value="F:magnesium ion binding"/>
    <property type="evidence" value="ECO:0007669"/>
    <property type="project" value="InterPro"/>
</dbReference>
<dbReference type="GO" id="GO:0010334">
    <property type="term" value="F:sesquiterpene synthase activity"/>
    <property type="evidence" value="ECO:0000314"/>
    <property type="project" value="UniProtKB"/>
</dbReference>
<dbReference type="GO" id="GO:0016102">
    <property type="term" value="P:diterpenoid biosynthetic process"/>
    <property type="evidence" value="ECO:0007669"/>
    <property type="project" value="InterPro"/>
</dbReference>
<dbReference type="GO" id="GO:0045338">
    <property type="term" value="P:farnesyl diphosphate metabolic process"/>
    <property type="evidence" value="ECO:0000314"/>
    <property type="project" value="UniProtKB"/>
</dbReference>
<dbReference type="GO" id="GO:0051762">
    <property type="term" value="P:sesquiterpene biosynthetic process"/>
    <property type="evidence" value="ECO:0000314"/>
    <property type="project" value="UniProtKB"/>
</dbReference>
<dbReference type="CDD" id="cd00684">
    <property type="entry name" value="Terpene_cyclase_plant_C1"/>
    <property type="match status" value="1"/>
</dbReference>
<dbReference type="FunFam" id="1.10.600.10:FF:000007">
    <property type="entry name" value="Isoprene synthase, chloroplastic"/>
    <property type="match status" value="1"/>
</dbReference>
<dbReference type="FunFam" id="1.50.10.130:FF:000001">
    <property type="entry name" value="Isoprene synthase, chloroplastic"/>
    <property type="match status" value="1"/>
</dbReference>
<dbReference type="Gene3D" id="1.10.600.10">
    <property type="entry name" value="Farnesyl Diphosphate Synthase"/>
    <property type="match status" value="1"/>
</dbReference>
<dbReference type="Gene3D" id="1.50.10.130">
    <property type="entry name" value="Terpene synthase, N-terminal domain"/>
    <property type="match status" value="1"/>
</dbReference>
<dbReference type="InterPro" id="IPR008949">
    <property type="entry name" value="Isoprenoid_synthase_dom_sf"/>
</dbReference>
<dbReference type="InterPro" id="IPR034741">
    <property type="entry name" value="Terpene_cyclase-like_1_C"/>
</dbReference>
<dbReference type="InterPro" id="IPR044814">
    <property type="entry name" value="Terpene_cyclase_plant_C1"/>
</dbReference>
<dbReference type="InterPro" id="IPR001906">
    <property type="entry name" value="Terpene_synth_N"/>
</dbReference>
<dbReference type="InterPro" id="IPR036965">
    <property type="entry name" value="Terpene_synth_N_sf"/>
</dbReference>
<dbReference type="InterPro" id="IPR050148">
    <property type="entry name" value="Terpene_synthase-like"/>
</dbReference>
<dbReference type="InterPro" id="IPR005630">
    <property type="entry name" value="Terpene_synthase_metal-bd"/>
</dbReference>
<dbReference type="InterPro" id="IPR008930">
    <property type="entry name" value="Terpenoid_cyclase/PrenylTrfase"/>
</dbReference>
<dbReference type="PANTHER" id="PTHR31225">
    <property type="entry name" value="OS04G0344100 PROTEIN-RELATED"/>
    <property type="match status" value="1"/>
</dbReference>
<dbReference type="PANTHER" id="PTHR31225:SF253">
    <property type="entry name" value="SESQUITERPENE SYNTHASE 31"/>
    <property type="match status" value="1"/>
</dbReference>
<dbReference type="Pfam" id="PF01397">
    <property type="entry name" value="Terpene_synth"/>
    <property type="match status" value="1"/>
</dbReference>
<dbReference type="Pfam" id="PF03936">
    <property type="entry name" value="Terpene_synth_C"/>
    <property type="match status" value="1"/>
</dbReference>
<dbReference type="SFLD" id="SFLDS00005">
    <property type="entry name" value="Isoprenoid_Synthase_Type_I"/>
    <property type="match status" value="1"/>
</dbReference>
<dbReference type="SFLD" id="SFLDG01019">
    <property type="entry name" value="Terpene_Cyclase_Like_1_C_Termi"/>
    <property type="match status" value="1"/>
</dbReference>
<dbReference type="SUPFAM" id="SSF48239">
    <property type="entry name" value="Terpenoid cyclases/Protein prenyltransferases"/>
    <property type="match status" value="1"/>
</dbReference>
<dbReference type="SUPFAM" id="SSF48576">
    <property type="entry name" value="Terpenoid synthases"/>
    <property type="match status" value="1"/>
</dbReference>
<proteinExistence type="evidence at protein level"/>
<keyword id="KW-0963">Cytoplasm</keyword>
<keyword id="KW-0456">Lyase</keyword>
<keyword id="KW-0460">Magnesium</keyword>
<keyword id="KW-0479">Metal-binding</keyword>
<organism>
    <name type="scientific">Pogostemon cablin</name>
    <name type="common">Patchouli</name>
    <name type="synonym">Mentha cablin</name>
    <dbReference type="NCBI Taxonomy" id="28511"/>
    <lineage>
        <taxon>Eukaryota</taxon>
        <taxon>Viridiplantae</taxon>
        <taxon>Streptophyta</taxon>
        <taxon>Embryophyta</taxon>
        <taxon>Tracheophyta</taxon>
        <taxon>Spermatophyta</taxon>
        <taxon>Magnoliopsida</taxon>
        <taxon>eudicotyledons</taxon>
        <taxon>Gunneridae</taxon>
        <taxon>Pentapetalae</taxon>
        <taxon>asterids</taxon>
        <taxon>lamiids</taxon>
        <taxon>Lamiales</taxon>
        <taxon>Lamiaceae</taxon>
        <taxon>Lamioideae</taxon>
        <taxon>Pogostemoneae</taxon>
        <taxon>Pogostemon</taxon>
    </lineage>
</organism>
<protein>
    <recommendedName>
        <fullName>Gamma-curcumene synthase</fullName>
        <ecNumber>4.2.3.94</ecNumber>
    </recommendedName>
    <alternativeName>
        <fullName>PatTpsA</fullName>
    </alternativeName>
</protein>
<accession>Q49SP7</accession>